<organism>
    <name type="scientific">Chaetomium thermophilum (strain DSM 1495 / CBS 144.50 / IMI 039719)</name>
    <name type="common">Thermochaetoides thermophila</name>
    <dbReference type="NCBI Taxonomy" id="759272"/>
    <lineage>
        <taxon>Eukaryota</taxon>
        <taxon>Fungi</taxon>
        <taxon>Dikarya</taxon>
        <taxon>Ascomycota</taxon>
        <taxon>Pezizomycotina</taxon>
        <taxon>Sordariomycetes</taxon>
        <taxon>Sordariomycetidae</taxon>
        <taxon>Sordariales</taxon>
        <taxon>Chaetomiaceae</taxon>
        <taxon>Thermochaetoides</taxon>
    </lineage>
</organism>
<evidence type="ECO:0000250" key="1">
    <source>
        <dbReference type="UniProtKB" id="Q15022"/>
    </source>
</evidence>
<evidence type="ECO:0000255" key="2">
    <source>
        <dbReference type="PROSITE-ProRule" id="PRU00042"/>
    </source>
</evidence>
<evidence type="ECO:0000256" key="3">
    <source>
        <dbReference type="SAM" id="MobiDB-lite"/>
    </source>
</evidence>
<evidence type="ECO:0000269" key="4">
    <source>
    </source>
</evidence>
<evidence type="ECO:0000269" key="5">
    <source>
    </source>
</evidence>
<evidence type="ECO:0000269" key="6">
    <source>
    </source>
</evidence>
<evidence type="ECO:0000269" key="7">
    <source>
    </source>
</evidence>
<evidence type="ECO:0000303" key="8">
    <source>
    </source>
</evidence>
<evidence type="ECO:0000305" key="9"/>
<evidence type="ECO:0007744" key="10">
    <source>
        <dbReference type="PDB" id="5BJS"/>
    </source>
</evidence>
<evidence type="ECO:0007744" key="11">
    <source>
        <dbReference type="PDB" id="5KJH"/>
    </source>
</evidence>
<evidence type="ECO:0007744" key="12">
    <source>
        <dbReference type="PDB" id="5KJI"/>
    </source>
</evidence>
<evidence type="ECO:0007744" key="13">
    <source>
        <dbReference type="PDB" id="5KKL"/>
    </source>
</evidence>
<evidence type="ECO:0007744" key="14">
    <source>
        <dbReference type="PDB" id="5M5G"/>
    </source>
</evidence>
<evidence type="ECO:0007744" key="15">
    <source>
        <dbReference type="PDB" id="5TQR"/>
    </source>
</evidence>
<evidence type="ECO:0007744" key="16">
    <source>
        <dbReference type="PDB" id="5VK3"/>
    </source>
</evidence>
<evidence type="ECO:0007744" key="17">
    <source>
        <dbReference type="PDB" id="5WF7"/>
    </source>
</evidence>
<evidence type="ECO:0007744" key="18">
    <source>
        <dbReference type="PDB" id="5WFC"/>
    </source>
</evidence>
<evidence type="ECO:0007744" key="19">
    <source>
        <dbReference type="PDB" id="5WFD"/>
    </source>
</evidence>
<evidence type="ECO:0007829" key="20">
    <source>
        <dbReference type="PDB" id="5BJS"/>
    </source>
</evidence>
<evidence type="ECO:0007829" key="21">
    <source>
        <dbReference type="PDB" id="5KJH"/>
    </source>
</evidence>
<evidence type="ECO:0007829" key="22">
    <source>
        <dbReference type="PDB" id="5VK3"/>
    </source>
</evidence>
<comment type="function">
    <text evidence="4 5">Component of the of the Polycomb Repressive Complex 2 (PRC2), a histone H3 lysine methyltransferase responsible for generating mono-, di-, and tri-methylation on Lys27 (H3K27me1, H3K27me2 and H3K27me3) (PubMed:26472914, PubMed:28008037). The tri-methylated form is known to be critical in gene repression, and its proper placement is essential in defining repression patterns during development (PubMed:26472914, PubMed:28008037). SUZ12 is not a catalytic subunit but is required for the complex regulation of histone H3 lysine methylation by EZH2 (PubMed:26472914).</text>
</comment>
<comment type="subunit">
    <text evidence="4 6 7">Component of the polycomb repressive complex 2 (PRC2) that consists of four core subunits icluding EZH2, EED, SUZ12, and RBBP4, among which EZH2 is the catalytic subunit and which minimally requires EED and SUZ12 for catalysis.</text>
</comment>
<comment type="subcellular location">
    <subcellularLocation>
        <location evidence="1">Nucleus</location>
    </subcellularLocation>
</comment>
<comment type="similarity">
    <text evidence="9">Belongs to the VEFS (VRN2-EMF2-FIS2-SU(Z)12) family.</text>
</comment>
<proteinExistence type="evidence at protein level"/>
<accession>G0RYC6</accession>
<feature type="chain" id="PRO_0000460963" description="Polycomb protein SUZ12">
    <location>
        <begin position="1"/>
        <end position="755"/>
    </location>
</feature>
<feature type="zinc finger region" description="C2H2-type" evidence="2">
    <location>
        <begin position="436"/>
        <end position="458"/>
    </location>
</feature>
<feature type="region of interest" description="Disordered" evidence="3">
    <location>
        <begin position="26"/>
        <end position="79"/>
    </location>
</feature>
<feature type="region of interest" description="Disordered" evidence="3">
    <location>
        <begin position="333"/>
        <end position="377"/>
    </location>
</feature>
<feature type="region of interest" description="Disordered" evidence="3">
    <location>
        <begin position="392"/>
        <end position="420"/>
    </location>
</feature>
<feature type="region of interest" description="Polycomb protein VEFS-Box" evidence="4">
    <location>
        <begin position="580"/>
        <end position="645"/>
    </location>
</feature>
<feature type="compositionally biased region" description="Low complexity" evidence="3">
    <location>
        <begin position="30"/>
        <end position="42"/>
    </location>
</feature>
<feature type="compositionally biased region" description="Polar residues" evidence="3">
    <location>
        <begin position="43"/>
        <end position="57"/>
    </location>
</feature>
<feature type="compositionally biased region" description="Polar residues" evidence="3">
    <location>
        <begin position="349"/>
        <end position="359"/>
    </location>
</feature>
<feature type="compositionally biased region" description="Basic and acidic residues" evidence="3">
    <location>
        <begin position="411"/>
        <end position="420"/>
    </location>
</feature>
<feature type="turn" evidence="22">
    <location>
        <begin position="563"/>
        <end position="565"/>
    </location>
</feature>
<feature type="helix" evidence="22">
    <location>
        <begin position="583"/>
        <end position="594"/>
    </location>
</feature>
<feature type="strand" evidence="21">
    <location>
        <begin position="597"/>
        <end position="599"/>
    </location>
</feature>
<feature type="helix" evidence="22">
    <location>
        <begin position="601"/>
        <end position="615"/>
    </location>
</feature>
<feature type="turn" evidence="20">
    <location>
        <begin position="616"/>
        <end position="618"/>
    </location>
</feature>
<feature type="turn" evidence="20">
    <location>
        <begin position="622"/>
        <end position="624"/>
    </location>
</feature>
<feature type="helix" evidence="22">
    <location>
        <begin position="625"/>
        <end position="635"/>
    </location>
</feature>
<feature type="helix" evidence="22">
    <location>
        <begin position="637"/>
        <end position="641"/>
    </location>
</feature>
<feature type="helix" evidence="22">
    <location>
        <begin position="644"/>
        <end position="659"/>
    </location>
</feature>
<feature type="helix" evidence="22">
    <location>
        <begin position="665"/>
        <end position="682"/>
    </location>
</feature>
<gene>
    <name evidence="8" type="primary">SUZ12</name>
    <name type="ORF">CTHT_0006210</name>
</gene>
<sequence>MTANTRHRGLPFLHRNWLKATNHWSKMGNKASSQAQKRSQSQTGDSATSRPATDGSGSQQQQNESQQEEERATKRRRISNDYDGFPLYENYASTQRALRIEVLKISHKDAPRWKNGITAMNGSGITAAPVDIRNIAQIKARCKLTIYGHRNGEQIVLHVDSQLCDIRVFKNSAGAAPMVRFANMRPFSIPEEKIFLEREDDSVFGLAKCYSVSVELESAGDPSWPPKELVPPTSDEETFYNKGLLPQRQWVLTANIADIYESRNRKSVRLRIKKHAQQDMATNFLMDMDVRWLTPISSLARAKEQAKDIQPSIVAIDPDNPIPLLVNGPAAANANGVNGQHAPKPECDTQPNGTHNEGTSAEEPAEGELTPSRSRRARQEINYNVKQLWNNAVGRETRNNSNKRRRGGAYGEDHPPSDDRSITYLLPPEQVHTDKFACLICGAENERLSQLRAHYMCHPQYDFYFEYKPKMGGYYVTVKPTAREGERDGEGLRPRVYQLGLPVKPLDLERYVEGDESWVTSRLGPENGREVMLPGRGVPKKPLRRPKRRPLLVPKTTQPLFDPLSKVQLLPGQPLPQHPIDDSWLLLKHRDNLQDFIDLRPEEKEFLQEWDAFILRRHISSEQYLPRYFLRFVREKADWLVSKRSRGEEFSKLVATLLARRVLPERVVIEATQVLNDARGRLREQGGVIEGEGEGQRKKECTARLYHDTCVDNPEQARLEGRHWKCADCRIKCQQQQQQQQQQELQQAQQLQQRS</sequence>
<reference key="1">
    <citation type="journal article" date="2011" name="Cell">
        <title>Insight into structure and assembly of the nuclear pore complex by utilizing the genome of a eukaryotic thermophile.</title>
        <authorList>
            <person name="Amlacher S."/>
            <person name="Sarges P."/>
            <person name="Flemming D."/>
            <person name="van Noort V."/>
            <person name="Kunze R."/>
            <person name="Devos D.P."/>
            <person name="Arumugam M."/>
            <person name="Bork P."/>
            <person name="Hurt E."/>
        </authorList>
    </citation>
    <scope>NUCLEOTIDE SEQUENCE [LARGE SCALE GENOMIC DNA]</scope>
    <source>
        <strain>DSM 1495 / CBS 144.50 / IMI 039719</strain>
    </source>
</reference>
<reference key="2">
    <citation type="journal article" date="2016" name="Science">
        <title>Comment on 'Structural basis of histone H3K27 trimethylation by an active polycomb repressive complex 2'.</title>
        <authorList>
            <person name="Zhang Y."/>
            <person name="Justin N."/>
            <person name="Wilson J.R."/>
            <person name="Gamblin S.J."/>
        </authorList>
    </citation>
    <scope>FUNCTION</scope>
</reference>
<reference evidence="11 12 13 14" key="3">
    <citation type="journal article" date="2015" name="Science">
        <title>Structural basis of histone H3K27 trimethylation by an active polycomb repressive complex 2.</title>
        <authorList>
            <person name="Jiao L."/>
            <person name="Liu X."/>
        </authorList>
    </citation>
    <scope>X-RAY CRYSTALLOGRAPHY (2.27 ANGSTROMS) OF 530-691 AND 531-539 IN COMPLEX WITH EZH2 AND EED</scope>
    <scope>FUNCTION</scope>
    <scope>DOMAIN</scope>
    <scope>SUBUNIT</scope>
</reference>
<reference evidence="10 15 16" key="4">
    <citation type="journal article" date="2017" name="J. Biol. Chem.">
        <title>Polycomb repressive complex 2 in an autoinhibited state.</title>
        <authorList>
            <person name="Bratkowski M."/>
            <person name="Yang X."/>
            <person name="Liu X."/>
        </authorList>
    </citation>
    <scope>X-RAY CRYSTALLOGRAPHY (2.11 ANGSTROMS) OF 530-691 IN COMPLEX WITH EZH2 AND EED</scope>
    <scope>FUNCTION</scope>
    <scope>SUBCELLULAR LOCATION</scope>
</reference>
<reference evidence="17 18 19" key="5">
    <citation type="journal article" date="2018" name="Sci. Rep.">
        <title>An evolutionarily conserved structural platform for PRC2 inhibition by a class of Ezh2 inhibitors.</title>
        <authorList>
            <person name="Bratkowski M."/>
            <person name="Yang X."/>
            <person name="Liu X."/>
        </authorList>
    </citation>
    <scope>X-RAY CRYSTALLOGRAPHY (2.28 ANGSTROMS) OF 530-691 IN COMPLEX WITH EZH2 AND EED</scope>
    <scope>SUBUNIT</scope>
</reference>
<protein>
    <recommendedName>
        <fullName evidence="8">Polycomb protein SUZ12</fullName>
    </recommendedName>
    <alternativeName>
        <fullName evidence="8">Suppressor of zeste 12 protein homolog</fullName>
    </alternativeName>
</protein>
<name>SUZ12_CHATD</name>
<dbReference type="EMBL" id="GL988032">
    <property type="protein sequence ID" value="EGS23912.1"/>
    <property type="molecule type" value="Genomic_DNA"/>
</dbReference>
<dbReference type="RefSeq" id="XP_006691154.1">
    <property type="nucleotide sequence ID" value="XM_006691091.1"/>
</dbReference>
<dbReference type="PDB" id="5BJS">
    <property type="method" value="X-ray"/>
    <property type="resolution" value="2.19 A"/>
    <property type="chains" value="B=530-691"/>
</dbReference>
<dbReference type="PDB" id="5KJH">
    <property type="method" value="X-ray"/>
    <property type="resolution" value="2.27 A"/>
    <property type="chains" value="B=530-691"/>
</dbReference>
<dbReference type="PDB" id="5KJI">
    <property type="method" value="X-ray"/>
    <property type="resolution" value="2.71 A"/>
    <property type="chains" value="B=530-691"/>
</dbReference>
<dbReference type="PDB" id="5KKL">
    <property type="method" value="X-ray"/>
    <property type="resolution" value="2.94 A"/>
    <property type="chains" value="B=543-691"/>
</dbReference>
<dbReference type="PDB" id="5M5G">
    <property type="method" value="X-ray"/>
    <property type="resolution" value="2.27 A"/>
    <property type="chains" value="E=531-539"/>
</dbReference>
<dbReference type="PDB" id="5TQR">
    <property type="method" value="X-ray"/>
    <property type="resolution" value="2.57 A"/>
    <property type="chains" value="B=530-691"/>
</dbReference>
<dbReference type="PDB" id="5VK3">
    <property type="method" value="X-ray"/>
    <property type="resolution" value="2.11 A"/>
    <property type="chains" value="B=530-691"/>
</dbReference>
<dbReference type="PDB" id="5WF7">
    <property type="method" value="X-ray"/>
    <property type="resolution" value="2.50 A"/>
    <property type="chains" value="B=530-691"/>
</dbReference>
<dbReference type="PDB" id="5WFC">
    <property type="method" value="X-ray"/>
    <property type="resolution" value="2.28 A"/>
    <property type="chains" value="B=530-691"/>
</dbReference>
<dbReference type="PDB" id="5WFD">
    <property type="method" value="X-ray"/>
    <property type="resolution" value="2.65 A"/>
    <property type="chains" value="B=530-691"/>
</dbReference>
<dbReference type="PDBsum" id="5BJS"/>
<dbReference type="PDBsum" id="5KJH"/>
<dbReference type="PDBsum" id="5KJI"/>
<dbReference type="PDBsum" id="5KKL"/>
<dbReference type="PDBsum" id="5M5G"/>
<dbReference type="PDBsum" id="5TQR"/>
<dbReference type="PDBsum" id="5VK3"/>
<dbReference type="PDBsum" id="5WF7"/>
<dbReference type="PDBsum" id="5WFC"/>
<dbReference type="PDBsum" id="5WFD"/>
<dbReference type="SMR" id="G0RYC6"/>
<dbReference type="STRING" id="759272.G0RYC6"/>
<dbReference type="GeneID" id="18254659"/>
<dbReference type="KEGG" id="cthr:CTHT_0006210"/>
<dbReference type="eggNOG" id="ENOG502SDK4">
    <property type="taxonomic scope" value="Eukaryota"/>
</dbReference>
<dbReference type="HOGENOM" id="CLU_019535_0_0_1"/>
<dbReference type="OMA" id="KEYIWEW"/>
<dbReference type="OrthoDB" id="166746at2759"/>
<dbReference type="Proteomes" id="UP000008066">
    <property type="component" value="Unassembled WGS sequence"/>
</dbReference>
<dbReference type="GO" id="GO:0005634">
    <property type="term" value="C:nucleus"/>
    <property type="evidence" value="ECO:0007669"/>
    <property type="project" value="UniProtKB-SubCell"/>
</dbReference>
<dbReference type="GO" id="GO:0008270">
    <property type="term" value="F:zinc ion binding"/>
    <property type="evidence" value="ECO:0007669"/>
    <property type="project" value="UniProtKB-KW"/>
</dbReference>
<dbReference type="GO" id="GO:0006325">
    <property type="term" value="P:chromatin organization"/>
    <property type="evidence" value="ECO:0007669"/>
    <property type="project" value="UniProtKB-KW"/>
</dbReference>
<dbReference type="CDD" id="cd21552">
    <property type="entry name" value="VEFS-box_ctSUZ12-like"/>
    <property type="match status" value="1"/>
</dbReference>
<dbReference type="InterPro" id="IPR019135">
    <property type="entry name" value="Polycomb_protein_VEFS-Box"/>
</dbReference>
<dbReference type="Pfam" id="PF09733">
    <property type="entry name" value="VEFS-Box"/>
    <property type="match status" value="1"/>
</dbReference>
<keyword id="KW-0002">3D-structure</keyword>
<keyword id="KW-0156">Chromatin regulator</keyword>
<keyword id="KW-0479">Metal-binding</keyword>
<keyword id="KW-0539">Nucleus</keyword>
<keyword id="KW-1185">Reference proteome</keyword>
<keyword id="KW-0678">Repressor</keyword>
<keyword id="KW-0804">Transcription</keyword>
<keyword id="KW-0805">Transcription regulation</keyword>
<keyword id="KW-0862">Zinc</keyword>
<keyword id="KW-0863">Zinc-finger</keyword>